<comment type="function">
    <text>Catalyzes the formation of 1-aminocyclopropane-1-carboxylate, a direct precursor of ethylene in higher plants.</text>
</comment>
<comment type="catalytic activity">
    <reaction>
        <text>S-adenosyl-L-methionine = 1-aminocyclopropane-1-carboxylate + S-methyl-5'-thioadenosine + H(+)</text>
        <dbReference type="Rhea" id="RHEA:21744"/>
        <dbReference type="ChEBI" id="CHEBI:15378"/>
        <dbReference type="ChEBI" id="CHEBI:17509"/>
        <dbReference type="ChEBI" id="CHEBI:58360"/>
        <dbReference type="ChEBI" id="CHEBI:59789"/>
        <dbReference type="EC" id="4.4.1.14"/>
    </reaction>
</comment>
<comment type="cofactor">
    <cofactor>
        <name>pyridoxal 5'-phosphate</name>
        <dbReference type="ChEBI" id="CHEBI:597326"/>
    </cofactor>
</comment>
<comment type="pathway">
    <text>Alkene biosynthesis; ethylene biosynthesis via S-adenosyl-L-methionine; ethylene from S-adenosyl-L-methionine: step 1/2.</text>
</comment>
<comment type="subunit">
    <text>Homodimer.</text>
</comment>
<comment type="similarity">
    <text evidence="2">Belongs to the class-I pyridoxal-phosphate-dependent aminotransferase family.</text>
</comment>
<sequence>MGFENEKNSSILSKLATNEELGENSPYFDGWKAYDNDPFHPLKNPNGVIQMGLAENQLCFDLIEEWIKRNPNASICTTEGIKSFRAIANFQDYHGLPEFRSAIAKFMEKTRGGRVTFDPERVVMAGGATGANETIIFCLADTGDAFLVPSPYYPAFNRDLRWRTGVQLIPIPCDSSNNFQITTKAVREAYENAQKSNIKVKGLILTNPSNPLGTTLDRDTLKNLLTFTNQHNIHLVCDEIYAATVFNTPQFVSIAEILDDETSHCNKDLVHIVYSLSKDMGLPGFRVGIVYSFNDAVVNCARKMSSFGLVSTQTQYLLAEMLSDERFVSNFLTESSKRLAKRHKHFTNGLEEVGIKCLRSNAGLFCWMDLRPLLKESTFDSEMSLWRVIINDVKLNVSPGSSFDCQEPGFFRVCFANMDDETVDIALARIRSFVGVKKSGDESTPILMEKKQQWKKNNLRLSFSKRMYDESVNLSPLSSPIPHSPLVRART</sequence>
<evidence type="ECO:0000250" key="1"/>
<evidence type="ECO:0000305" key="2"/>
<protein>
    <recommendedName>
        <fullName>1-aminocyclopropane-1-carboxylate synthase</fullName>
        <shortName>ACC synthase</shortName>
        <ecNumber>4.4.1.14</ecNumber>
    </recommendedName>
    <alternativeName>
        <fullName>S-adenosyl-L-methionine methylthioadenosine-lyase</fullName>
    </alternativeName>
</protein>
<keyword id="KW-0266">Ethylene biosynthesis</keyword>
<keyword id="KW-0292">Fruit ripening</keyword>
<keyword id="KW-0456">Lyase</keyword>
<keyword id="KW-0663">Pyridoxal phosphate</keyword>
<keyword id="KW-1185">Reference proteome</keyword>
<keyword id="KW-0949">S-adenosyl-L-methionine</keyword>
<accession>Q07262</accession>
<proteinExistence type="evidence at transcript level"/>
<name>1A1C_TOBAC</name>
<dbReference type="EC" id="4.4.1.14"/>
<dbReference type="EMBL" id="X65982">
    <property type="protein sequence ID" value="CAA46797.1"/>
    <property type="molecule type" value="mRNA"/>
</dbReference>
<dbReference type="PIR" id="T03978">
    <property type="entry name" value="T03978"/>
</dbReference>
<dbReference type="RefSeq" id="NP_001313190.2">
    <property type="nucleotide sequence ID" value="NM_001326261.2"/>
</dbReference>
<dbReference type="SMR" id="Q07262"/>
<dbReference type="STRING" id="4097.Q07262"/>
<dbReference type="PaxDb" id="4097-Q07262"/>
<dbReference type="GeneID" id="107831434"/>
<dbReference type="KEGG" id="nta:107831434"/>
<dbReference type="OrthoDB" id="691673at2759"/>
<dbReference type="UniPathway" id="UPA00384">
    <property type="reaction ID" value="UER00562"/>
</dbReference>
<dbReference type="Proteomes" id="UP000084051">
    <property type="component" value="Unplaced"/>
</dbReference>
<dbReference type="GO" id="GO:0016847">
    <property type="term" value="F:1-aminocyclopropane-1-carboxylate synthase activity"/>
    <property type="evidence" value="ECO:0007669"/>
    <property type="project" value="UniProtKB-EC"/>
</dbReference>
<dbReference type="GO" id="GO:0030170">
    <property type="term" value="F:pyridoxal phosphate binding"/>
    <property type="evidence" value="ECO:0007669"/>
    <property type="project" value="InterPro"/>
</dbReference>
<dbReference type="GO" id="GO:0008483">
    <property type="term" value="F:transaminase activity"/>
    <property type="evidence" value="ECO:0000318"/>
    <property type="project" value="GO_Central"/>
</dbReference>
<dbReference type="GO" id="GO:0006520">
    <property type="term" value="P:amino acid metabolic process"/>
    <property type="evidence" value="ECO:0000318"/>
    <property type="project" value="GO_Central"/>
</dbReference>
<dbReference type="GO" id="GO:0009693">
    <property type="term" value="P:ethylene biosynthetic process"/>
    <property type="evidence" value="ECO:0007669"/>
    <property type="project" value="UniProtKB-UniPathway"/>
</dbReference>
<dbReference type="GO" id="GO:0009835">
    <property type="term" value="P:fruit ripening"/>
    <property type="evidence" value="ECO:0007669"/>
    <property type="project" value="UniProtKB-KW"/>
</dbReference>
<dbReference type="CDD" id="cd00609">
    <property type="entry name" value="AAT_like"/>
    <property type="match status" value="1"/>
</dbReference>
<dbReference type="FunFam" id="3.90.1150.10:FF:000038">
    <property type="entry name" value="1-aminocyclopropane-1-carboxylate synthase 2"/>
    <property type="match status" value="1"/>
</dbReference>
<dbReference type="FunFam" id="3.40.640.10:FF:000051">
    <property type="entry name" value="1-aminocyclopropane-1-carboxylate synthase 3"/>
    <property type="match status" value="1"/>
</dbReference>
<dbReference type="Gene3D" id="3.90.1150.10">
    <property type="entry name" value="Aspartate Aminotransferase, domain 1"/>
    <property type="match status" value="1"/>
</dbReference>
<dbReference type="Gene3D" id="3.40.640.10">
    <property type="entry name" value="Type I PLP-dependent aspartate aminotransferase-like (Major domain)"/>
    <property type="match status" value="1"/>
</dbReference>
<dbReference type="InterPro" id="IPR004839">
    <property type="entry name" value="Aminotransferase_I/II_large"/>
</dbReference>
<dbReference type="InterPro" id="IPR050478">
    <property type="entry name" value="Ethylene_sulfur-biosynth"/>
</dbReference>
<dbReference type="InterPro" id="IPR004838">
    <property type="entry name" value="NHTrfase_class1_PyrdxlP-BS"/>
</dbReference>
<dbReference type="InterPro" id="IPR015424">
    <property type="entry name" value="PyrdxlP-dep_Trfase"/>
</dbReference>
<dbReference type="InterPro" id="IPR015421">
    <property type="entry name" value="PyrdxlP-dep_Trfase_major"/>
</dbReference>
<dbReference type="InterPro" id="IPR015422">
    <property type="entry name" value="PyrdxlP-dep_Trfase_small"/>
</dbReference>
<dbReference type="PANTHER" id="PTHR43795:SF74">
    <property type="entry name" value="1-AMINOCYCLOPROPANE-1-CARBOXYLATE SYNTHASE-LIKE PROTEIN 1"/>
    <property type="match status" value="1"/>
</dbReference>
<dbReference type="PANTHER" id="PTHR43795">
    <property type="entry name" value="BIFUNCTIONAL ASPARTATE AMINOTRANSFERASE AND GLUTAMATE/ASPARTATE-PREPHENATE AMINOTRANSFERASE-RELATED"/>
    <property type="match status" value="1"/>
</dbReference>
<dbReference type="Pfam" id="PF00155">
    <property type="entry name" value="Aminotran_1_2"/>
    <property type="match status" value="1"/>
</dbReference>
<dbReference type="PRINTS" id="PR00753">
    <property type="entry name" value="ACCSYNTHASE"/>
</dbReference>
<dbReference type="SUPFAM" id="SSF53383">
    <property type="entry name" value="PLP-dependent transferases"/>
    <property type="match status" value="1"/>
</dbReference>
<dbReference type="PROSITE" id="PS00105">
    <property type="entry name" value="AA_TRANSFER_CLASS_1"/>
    <property type="match status" value="1"/>
</dbReference>
<reference key="1">
    <citation type="journal article" date="1992" name="Plant Physiol.">
        <title>Nucleotide sequence of the Nicotiana tabacum cv Xanthi gene encoding 1-aminocyclopropane-1-carboxylate synthase.</title>
        <authorList>
            <person name="Bailey B.A."/>
            <person name="Avni A."/>
            <person name="Li N."/>
            <person name="Matoo A.K."/>
            <person name="Anderson J.D."/>
        </authorList>
    </citation>
    <scope>NUCLEOTIDE SEQUENCE [MRNA]</scope>
    <source>
        <strain>cv. Xanthi</strain>
    </source>
</reference>
<feature type="chain" id="PRO_0000123920" description="1-aminocyclopropane-1-carboxylate synthase">
    <location>
        <begin position="1"/>
        <end position="491"/>
    </location>
</feature>
<feature type="modified residue" description="N6-(pyridoxal phosphate)lysine" evidence="1">
    <location>
        <position position="278"/>
    </location>
</feature>
<organism>
    <name type="scientific">Nicotiana tabacum</name>
    <name type="common">Common tobacco</name>
    <dbReference type="NCBI Taxonomy" id="4097"/>
    <lineage>
        <taxon>Eukaryota</taxon>
        <taxon>Viridiplantae</taxon>
        <taxon>Streptophyta</taxon>
        <taxon>Embryophyta</taxon>
        <taxon>Tracheophyta</taxon>
        <taxon>Spermatophyta</taxon>
        <taxon>Magnoliopsida</taxon>
        <taxon>eudicotyledons</taxon>
        <taxon>Gunneridae</taxon>
        <taxon>Pentapetalae</taxon>
        <taxon>asterids</taxon>
        <taxon>lamiids</taxon>
        <taxon>Solanales</taxon>
        <taxon>Solanaceae</taxon>
        <taxon>Nicotianoideae</taxon>
        <taxon>Nicotianeae</taxon>
        <taxon>Nicotiana</taxon>
    </lineage>
</organism>
<gene>
    <name type="primary">ACS1</name>
</gene>